<proteinExistence type="inferred from homology"/>
<accession>Q0T7M8</accession>
<gene>
    <name evidence="2" type="primary">betI</name>
    <name type="ordered locus">SFV_0324</name>
</gene>
<sequence length="195" mass="21790">MPKLGMQSIRRRQLIDATLEAINEVGMHDATIAQIARRAGVSTGIISHYFRDKNGLLEATMRDITSQLRDAVLNRLHALPQGSAEQRLQAIVGGNFDETQVSSAAMKAWLAFWASSMHQPMLYRLQQVSSRRLLSNLVSEFRRELPRQQAQEAGYGLAALIDGLWLRAALSGKPLDKPLAHSLTRHFITQHLPTD</sequence>
<evidence type="ECO:0000250" key="1"/>
<evidence type="ECO:0000255" key="2">
    <source>
        <dbReference type="HAMAP-Rule" id="MF_00768"/>
    </source>
</evidence>
<keyword id="KW-0238">DNA-binding</keyword>
<keyword id="KW-0678">Repressor</keyword>
<keyword id="KW-0804">Transcription</keyword>
<keyword id="KW-0805">Transcription regulation</keyword>
<feature type="chain" id="PRO_1000083569" description="HTH-type transcriptional regulator BetI">
    <location>
        <begin position="1"/>
        <end position="195"/>
    </location>
</feature>
<feature type="domain" description="HTH tetR-type" evidence="2">
    <location>
        <begin position="8"/>
        <end position="68"/>
    </location>
</feature>
<feature type="DNA-binding region" description="H-T-H motif" evidence="2">
    <location>
        <begin position="31"/>
        <end position="50"/>
    </location>
</feature>
<name>BETI_SHIF8</name>
<reference key="1">
    <citation type="journal article" date="2006" name="BMC Genomics">
        <title>Complete genome sequence of Shigella flexneri 5b and comparison with Shigella flexneri 2a.</title>
        <authorList>
            <person name="Nie H."/>
            <person name="Yang F."/>
            <person name="Zhang X."/>
            <person name="Yang J."/>
            <person name="Chen L."/>
            <person name="Wang J."/>
            <person name="Xiong Z."/>
            <person name="Peng J."/>
            <person name="Sun L."/>
            <person name="Dong J."/>
            <person name="Xue Y."/>
            <person name="Xu X."/>
            <person name="Chen S."/>
            <person name="Yao Z."/>
            <person name="Shen Y."/>
            <person name="Jin Q."/>
        </authorList>
    </citation>
    <scope>NUCLEOTIDE SEQUENCE [LARGE SCALE GENOMIC DNA]</scope>
    <source>
        <strain>8401</strain>
    </source>
</reference>
<comment type="function">
    <text evidence="1">Repressor involved in the biosynthesis of the osmoprotectant glycine betaine. It represses transcription of the choline transporter BetT and the genes of BetAB involved in the synthesis of glycine betaine (By similarity).</text>
</comment>
<comment type="pathway">
    <text>Amine and polyamine biosynthesis; betaine biosynthesis via choline pathway [regulation].</text>
</comment>
<dbReference type="EMBL" id="CP000266">
    <property type="protein sequence ID" value="ABF02598.1"/>
    <property type="molecule type" value="Genomic_DNA"/>
</dbReference>
<dbReference type="RefSeq" id="WP_001295527.1">
    <property type="nucleotide sequence ID" value="NC_008258.1"/>
</dbReference>
<dbReference type="SMR" id="Q0T7M8"/>
<dbReference type="GeneID" id="75206485"/>
<dbReference type="KEGG" id="sfv:SFV_0324"/>
<dbReference type="HOGENOM" id="CLU_069356_15_4_6"/>
<dbReference type="UniPathway" id="UPA00529"/>
<dbReference type="Proteomes" id="UP000000659">
    <property type="component" value="Chromosome"/>
</dbReference>
<dbReference type="GO" id="GO:0003700">
    <property type="term" value="F:DNA-binding transcription factor activity"/>
    <property type="evidence" value="ECO:0007669"/>
    <property type="project" value="UniProtKB-UniRule"/>
</dbReference>
<dbReference type="GO" id="GO:0000976">
    <property type="term" value="F:transcription cis-regulatory region binding"/>
    <property type="evidence" value="ECO:0007669"/>
    <property type="project" value="TreeGrafter"/>
</dbReference>
<dbReference type="GO" id="GO:0019285">
    <property type="term" value="P:glycine betaine biosynthetic process from choline"/>
    <property type="evidence" value="ECO:0007669"/>
    <property type="project" value="UniProtKB-UniRule"/>
</dbReference>
<dbReference type="GO" id="GO:0045892">
    <property type="term" value="P:negative regulation of DNA-templated transcription"/>
    <property type="evidence" value="ECO:0007669"/>
    <property type="project" value="UniProtKB-UniRule"/>
</dbReference>
<dbReference type="FunFam" id="1.10.357.10:FF:000009">
    <property type="entry name" value="HTH-type transcriptional regulator BetI"/>
    <property type="match status" value="1"/>
</dbReference>
<dbReference type="Gene3D" id="1.10.357.10">
    <property type="entry name" value="Tetracycline Repressor, domain 2"/>
    <property type="match status" value="1"/>
</dbReference>
<dbReference type="HAMAP" id="MF_00768">
    <property type="entry name" value="HTH_type_BetI"/>
    <property type="match status" value="1"/>
</dbReference>
<dbReference type="InterPro" id="IPR039538">
    <property type="entry name" value="BetI_C"/>
</dbReference>
<dbReference type="InterPro" id="IPR023772">
    <property type="entry name" value="DNA-bd_HTH_TetR-type_CS"/>
</dbReference>
<dbReference type="InterPro" id="IPR009057">
    <property type="entry name" value="Homeodomain-like_sf"/>
</dbReference>
<dbReference type="InterPro" id="IPR050109">
    <property type="entry name" value="HTH-type_TetR-like_transc_reg"/>
</dbReference>
<dbReference type="InterPro" id="IPR001647">
    <property type="entry name" value="HTH_TetR"/>
</dbReference>
<dbReference type="InterPro" id="IPR036271">
    <property type="entry name" value="Tet_transcr_reg_TetR-rel_C_sf"/>
</dbReference>
<dbReference type="InterPro" id="IPR017757">
    <property type="entry name" value="Tscrpt_rep_BetI"/>
</dbReference>
<dbReference type="NCBIfam" id="TIGR03384">
    <property type="entry name" value="betaine_BetI"/>
    <property type="match status" value="1"/>
</dbReference>
<dbReference type="NCBIfam" id="NF001978">
    <property type="entry name" value="PRK00767.1"/>
    <property type="match status" value="1"/>
</dbReference>
<dbReference type="PANTHER" id="PTHR30055:SF234">
    <property type="entry name" value="HTH-TYPE TRANSCRIPTIONAL REGULATOR BETI"/>
    <property type="match status" value="1"/>
</dbReference>
<dbReference type="PANTHER" id="PTHR30055">
    <property type="entry name" value="HTH-TYPE TRANSCRIPTIONAL REGULATOR RUTR"/>
    <property type="match status" value="1"/>
</dbReference>
<dbReference type="Pfam" id="PF13977">
    <property type="entry name" value="TetR_C_6"/>
    <property type="match status" value="1"/>
</dbReference>
<dbReference type="Pfam" id="PF00440">
    <property type="entry name" value="TetR_N"/>
    <property type="match status" value="1"/>
</dbReference>
<dbReference type="PRINTS" id="PR00455">
    <property type="entry name" value="HTHTETR"/>
</dbReference>
<dbReference type="SUPFAM" id="SSF46689">
    <property type="entry name" value="Homeodomain-like"/>
    <property type="match status" value="1"/>
</dbReference>
<dbReference type="SUPFAM" id="SSF48498">
    <property type="entry name" value="Tetracyclin repressor-like, C-terminal domain"/>
    <property type="match status" value="1"/>
</dbReference>
<dbReference type="PROSITE" id="PS01081">
    <property type="entry name" value="HTH_TETR_1"/>
    <property type="match status" value="1"/>
</dbReference>
<dbReference type="PROSITE" id="PS50977">
    <property type="entry name" value="HTH_TETR_2"/>
    <property type="match status" value="1"/>
</dbReference>
<organism>
    <name type="scientific">Shigella flexneri serotype 5b (strain 8401)</name>
    <dbReference type="NCBI Taxonomy" id="373384"/>
    <lineage>
        <taxon>Bacteria</taxon>
        <taxon>Pseudomonadati</taxon>
        <taxon>Pseudomonadota</taxon>
        <taxon>Gammaproteobacteria</taxon>
        <taxon>Enterobacterales</taxon>
        <taxon>Enterobacteriaceae</taxon>
        <taxon>Shigella</taxon>
    </lineage>
</organism>
<protein>
    <recommendedName>
        <fullName evidence="2">HTH-type transcriptional regulator BetI</fullName>
    </recommendedName>
</protein>